<accession>P44523</accession>
<protein>
    <recommendedName>
        <fullName>TonB-dependent heme receptor A</fullName>
    </recommendedName>
</protein>
<sequence>MNILINKRIFLLVTLVGIQLNVTAKQNSSNSNREELLPIIVNTNDDSNKLPGRSVLKQKNIEQXQADNAANLINILPGVNMAGGFRPGGQTLNINGMGDAEDVRVQLDGATKSFEKYQQGSIFIEPELLRRVTVDKGNYSPQYGNGGFAGTVKFETKDARDFLQENQKIGGFLKYGNNSNNNQKTYSTALVLQNEQKNIDLLLFGSVRNAGDYKRPDNSKILFSKNNQKTGLIKLNWQISPEHLLTLSSVYGIHKGWEPFAAKRDILPKPSLSDIMRYGTDIAWKRKLVYRDQKDENYTLKYNYLPENNPWINLSTQFSYSKTTQNDMRPKEASSGLVGSLGNQSWITYSDLTFDINNTSTFNIKTTVHELLFGLQWLKNTRNTLMYDKSKVRKADYNYGYFQPYYMPSGRQYTQAFYLQDQIKWKNIIFSTGVRYDHINNIGQKNLALKYNDISAGHDYSQKNYNGWSYYLGLNYDVNHYLSLFTNFSKTWRAPVIDEQYETQFKQSSVPATSLNLEKEMINQTRVGGIITLNHLFQENDAFQFRTTYFYNRGKNEIFKTRGVNCVGNAADTNNKVCPKIIENYRNLPGYVIQGAELEAYYQSTYLFGEITYSYVKGKRDTSPRNPWGKTSTWIAEIPPRKATTALGFNVPKYYLTVGWRAEFVRRQDRSPLSGDPKASSWSLPASRGYSLHNLFLSWSPAKIKGMNVKITVDNLFNRAYNPYLGELASGTGRNIKFSLSQKF</sequence>
<evidence type="ECO:0000250" key="1"/>
<evidence type="ECO:0000255" key="2"/>
<evidence type="ECO:0000255" key="3">
    <source>
        <dbReference type="PROSITE-ProRule" id="PRU01360"/>
    </source>
</evidence>
<evidence type="ECO:0000305" key="4"/>
<dbReference type="EMBL" id="L42023">
    <property type="protein sequence ID" value="AAC21789.1"/>
    <property type="molecule type" value="Genomic_DNA"/>
</dbReference>
<dbReference type="PIR" id="B64049">
    <property type="entry name" value="B64049"/>
</dbReference>
<dbReference type="RefSeq" id="NP_438287.1">
    <property type="nucleotide sequence ID" value="NC_000907.1"/>
</dbReference>
<dbReference type="STRING" id="71421.HI_0113"/>
<dbReference type="EnsemblBacteria" id="AAC21789">
    <property type="protein sequence ID" value="AAC21789"/>
    <property type="gene ID" value="HI_0113"/>
</dbReference>
<dbReference type="KEGG" id="hin:HI_0113"/>
<dbReference type="PATRIC" id="fig|71421.8.peg.117"/>
<dbReference type="eggNOG" id="COG1629">
    <property type="taxonomic scope" value="Bacteria"/>
</dbReference>
<dbReference type="HOGENOM" id="CLU_008287_19_3_6"/>
<dbReference type="OrthoDB" id="9760494at2"/>
<dbReference type="PhylomeDB" id="P44523"/>
<dbReference type="BioCyc" id="HINF71421:G1GJ1-117-MONOMER"/>
<dbReference type="Proteomes" id="UP000000579">
    <property type="component" value="Chromosome"/>
</dbReference>
<dbReference type="GO" id="GO:0009279">
    <property type="term" value="C:cell outer membrane"/>
    <property type="evidence" value="ECO:0000318"/>
    <property type="project" value="GO_Central"/>
</dbReference>
<dbReference type="GO" id="GO:0015232">
    <property type="term" value="F:heme transmembrane transporter activity"/>
    <property type="evidence" value="ECO:0007669"/>
    <property type="project" value="InterPro"/>
</dbReference>
<dbReference type="GO" id="GO:0015344">
    <property type="term" value="F:siderophore uptake transmembrane transporter activity"/>
    <property type="evidence" value="ECO:0000318"/>
    <property type="project" value="GO_Central"/>
</dbReference>
<dbReference type="GO" id="GO:0044718">
    <property type="term" value="P:siderophore transmembrane transport"/>
    <property type="evidence" value="ECO:0000318"/>
    <property type="project" value="GO_Central"/>
</dbReference>
<dbReference type="CDD" id="cd01347">
    <property type="entry name" value="ligand_gated_channel"/>
    <property type="match status" value="1"/>
</dbReference>
<dbReference type="Gene3D" id="2.40.170.20">
    <property type="entry name" value="TonB-dependent receptor, beta-barrel domain"/>
    <property type="match status" value="1"/>
</dbReference>
<dbReference type="Gene3D" id="2.170.130.10">
    <property type="entry name" value="TonB-dependent receptor, plug domain"/>
    <property type="match status" value="1"/>
</dbReference>
<dbReference type="InterPro" id="IPR012910">
    <property type="entry name" value="Plug_dom"/>
</dbReference>
<dbReference type="InterPro" id="IPR037066">
    <property type="entry name" value="Plug_dom_sf"/>
</dbReference>
<dbReference type="InterPro" id="IPR039426">
    <property type="entry name" value="TonB-dep_rcpt-like"/>
</dbReference>
<dbReference type="InterPro" id="IPR000531">
    <property type="entry name" value="TonB-dep_rcpt_b-brl"/>
</dbReference>
<dbReference type="InterPro" id="IPR011276">
    <property type="entry name" value="TonB_haem/Hb_rcpt"/>
</dbReference>
<dbReference type="InterPro" id="IPR010949">
    <property type="entry name" value="TonB_Hb/transfer/lactofer_rcpt"/>
</dbReference>
<dbReference type="InterPro" id="IPR036942">
    <property type="entry name" value="TonB_rcpt_b-brl_sf"/>
</dbReference>
<dbReference type="InterPro" id="IPR010917">
    <property type="entry name" value="TonB_rcpt_CS"/>
</dbReference>
<dbReference type="NCBIfam" id="TIGR01785">
    <property type="entry name" value="TonB-hemin"/>
    <property type="match status" value="1"/>
</dbReference>
<dbReference type="NCBIfam" id="TIGR01786">
    <property type="entry name" value="TonB-hemlactrns"/>
    <property type="match status" value="1"/>
</dbReference>
<dbReference type="PANTHER" id="PTHR30442:SF0">
    <property type="entry name" value="FE(3+) DICITRATE TRANSPORT PROTEIN FECA"/>
    <property type="match status" value="1"/>
</dbReference>
<dbReference type="PANTHER" id="PTHR30442">
    <property type="entry name" value="IRON III DICITRATE TRANSPORT PROTEIN FECA"/>
    <property type="match status" value="1"/>
</dbReference>
<dbReference type="Pfam" id="PF07715">
    <property type="entry name" value="Plug"/>
    <property type="match status" value="1"/>
</dbReference>
<dbReference type="Pfam" id="PF00593">
    <property type="entry name" value="TonB_dep_Rec_b-barrel"/>
    <property type="match status" value="1"/>
</dbReference>
<dbReference type="SUPFAM" id="SSF56935">
    <property type="entry name" value="Porins"/>
    <property type="match status" value="1"/>
</dbReference>
<dbReference type="PROSITE" id="PS01156">
    <property type="entry name" value="TONB_DEPENDENT_REC_2"/>
    <property type="match status" value="1"/>
</dbReference>
<dbReference type="PROSITE" id="PS52016">
    <property type="entry name" value="TONB_DEPENDENT_REC_3"/>
    <property type="match status" value="1"/>
</dbReference>
<organism>
    <name type="scientific">Haemophilus influenzae (strain ATCC 51907 / DSM 11121 / KW20 / Rd)</name>
    <dbReference type="NCBI Taxonomy" id="71421"/>
    <lineage>
        <taxon>Bacteria</taxon>
        <taxon>Pseudomonadati</taxon>
        <taxon>Pseudomonadota</taxon>
        <taxon>Gammaproteobacteria</taxon>
        <taxon>Pasteurellales</taxon>
        <taxon>Pasteurellaceae</taxon>
        <taxon>Haemophilus</taxon>
    </lineage>
</organism>
<feature type="signal peptide" evidence="2">
    <location>
        <begin position="1"/>
        <end position="24"/>
    </location>
</feature>
<feature type="chain" id="PRO_0000034762" description="TonB-dependent heme receptor A">
    <location>
        <begin position="25"/>
        <end position="744"/>
    </location>
</feature>
<feature type="domain" description="TBDR plug" evidence="3">
    <location>
        <begin position="45"/>
        <end position="157"/>
    </location>
</feature>
<feature type="domain" description="TBDR beta-barrel" evidence="3">
    <location>
        <begin position="168"/>
        <end position="744"/>
    </location>
</feature>
<proteinExistence type="inferred from homology"/>
<keyword id="KW-0998">Cell outer membrane</keyword>
<keyword id="KW-0472">Membrane</keyword>
<keyword id="KW-0675">Receptor</keyword>
<keyword id="KW-1185">Reference proteome</keyword>
<keyword id="KW-0732">Signal</keyword>
<keyword id="KW-0798">TonB box</keyword>
<keyword id="KW-0812">Transmembrane</keyword>
<keyword id="KW-1134">Transmembrane beta strand</keyword>
<keyword id="KW-0813">Transport</keyword>
<name>TDHA_HAEIN</name>
<comment type="function">
    <text evidence="1">Heme receptor.</text>
</comment>
<comment type="subcellular location">
    <subcellularLocation>
        <location evidence="3">Cell outer membrane</location>
        <topology evidence="3">Multi-pass membrane protein</topology>
    </subcellularLocation>
</comment>
<comment type="similarity">
    <text evidence="4">Belongs to the TonB-dependent receptor family.</text>
</comment>
<gene>
    <name type="primary">tdhA</name>
    <name type="ordered locus">HI_0113</name>
</gene>
<reference key="1">
    <citation type="journal article" date="1995" name="Science">
        <title>Whole-genome random sequencing and assembly of Haemophilus influenzae Rd.</title>
        <authorList>
            <person name="Fleischmann R.D."/>
            <person name="Adams M.D."/>
            <person name="White O."/>
            <person name="Clayton R.A."/>
            <person name="Kirkness E.F."/>
            <person name="Kerlavage A.R."/>
            <person name="Bult C.J."/>
            <person name="Tomb J.-F."/>
            <person name="Dougherty B.A."/>
            <person name="Merrick J.M."/>
            <person name="McKenney K."/>
            <person name="Sutton G.G."/>
            <person name="FitzHugh W."/>
            <person name="Fields C.A."/>
            <person name="Gocayne J.D."/>
            <person name="Scott J.D."/>
            <person name="Shirley R."/>
            <person name="Liu L.-I."/>
            <person name="Glodek A."/>
            <person name="Kelley J.M."/>
            <person name="Weidman J.F."/>
            <person name="Phillips C.A."/>
            <person name="Spriggs T."/>
            <person name="Hedblom E."/>
            <person name="Cotton M.D."/>
            <person name="Utterback T.R."/>
            <person name="Hanna M.C."/>
            <person name="Nguyen D.T."/>
            <person name="Saudek D.M."/>
            <person name="Brandon R.C."/>
            <person name="Fine L.D."/>
            <person name="Fritchman J.L."/>
            <person name="Fuhrmann J.L."/>
            <person name="Geoghagen N.S.M."/>
            <person name="Gnehm C.L."/>
            <person name="McDonald L.A."/>
            <person name="Small K.V."/>
            <person name="Fraser C.M."/>
            <person name="Smith H.O."/>
            <person name="Venter J.C."/>
        </authorList>
    </citation>
    <scope>NUCLEOTIDE SEQUENCE [LARGE SCALE GENOMIC DNA]</scope>
    <source>
        <strain>ATCC 51907 / DSM 11121 / KW20 / Rd</strain>
    </source>
</reference>